<feature type="chain" id="PRO_0000233255" description="L-ribulose-5-phosphate 3-epimerase UlaE">
    <location>
        <begin position="1"/>
        <end position="284"/>
    </location>
</feature>
<gene>
    <name evidence="1" type="primary">ulaE</name>
    <name type="ordered locus">STY4743</name>
    <name type="ordered locus">t4438</name>
</gene>
<protein>
    <recommendedName>
        <fullName evidence="1">L-ribulose-5-phosphate 3-epimerase UlaE</fullName>
        <ecNumber evidence="1">5.1.3.22</ecNumber>
    </recommendedName>
    <alternativeName>
        <fullName evidence="1">L-ascorbate utilization protein E</fullName>
    </alternativeName>
    <alternativeName>
        <fullName evidence="1">L-xylulose-5-phosphate 3-epimerase</fullName>
    </alternativeName>
</protein>
<name>ULAE_SALTI</name>
<comment type="function">
    <text evidence="1">Catalyzes the isomerization of L-xylulose-5-phosphate to L-ribulose-5-phosphate. Is involved in the anaerobic L-ascorbate utilization.</text>
</comment>
<comment type="catalytic activity">
    <reaction evidence="1">
        <text>L-ribulose 5-phosphate = L-xylulose 5-phosphate</text>
        <dbReference type="Rhea" id="RHEA:18497"/>
        <dbReference type="ChEBI" id="CHEBI:57829"/>
        <dbReference type="ChEBI" id="CHEBI:58226"/>
        <dbReference type="EC" id="5.1.3.22"/>
    </reaction>
</comment>
<comment type="pathway">
    <text evidence="1">Cofactor degradation; L-ascorbate degradation; D-xylulose 5-phosphate from L-ascorbate: step 3/4.</text>
</comment>
<comment type="induction">
    <text evidence="1">Induced by L-ascorbate. Repressed by UlaR.</text>
</comment>
<comment type="similarity">
    <text evidence="1">Belongs to the L-ribulose-5-phosphate 3-epimerase family.</text>
</comment>
<sequence>MLSKQIPLGIYEKALPAGECWLERLRLAKTLGFDFVEMSVDETDARLARLDWSREQRLALVSAVAETGVRVPSMCLSAHRRFPLGSEDDAVRAQGLEIMRKAIQFAQDVGIRVIQLAGYDVYYQQANDETRCRFRDGLKESVDMASRAQVTLAMEIMDYPLMNSISKALGYAHYLNNPCFQLYPDIGNLSAWDNDVQMELQAGIGHIVAVHVKDTKPGVFKNVPFGEGVVDFERCFETLKQSGYCGPYLIEMWSETAENPAAEVAKARDWVKARMAKAGMVEAA</sequence>
<accession>Q8Z168</accession>
<accession>Q7C543</accession>
<dbReference type="EC" id="5.1.3.22" evidence="1"/>
<dbReference type="EMBL" id="AL513382">
    <property type="protein sequence ID" value="CAD06864.1"/>
    <property type="molecule type" value="Genomic_DNA"/>
</dbReference>
<dbReference type="EMBL" id="AE014613">
    <property type="protein sequence ID" value="AAO71885.1"/>
    <property type="molecule type" value="Genomic_DNA"/>
</dbReference>
<dbReference type="RefSeq" id="NP_458821.1">
    <property type="nucleotide sequence ID" value="NC_003198.1"/>
</dbReference>
<dbReference type="RefSeq" id="WP_000949528.1">
    <property type="nucleotide sequence ID" value="NZ_WSUR01000012.1"/>
</dbReference>
<dbReference type="SMR" id="Q8Z168"/>
<dbReference type="STRING" id="220341.gene:17588564"/>
<dbReference type="KEGG" id="stt:t4438"/>
<dbReference type="KEGG" id="sty:STY4743"/>
<dbReference type="PATRIC" id="fig|220341.7.peg.4844"/>
<dbReference type="eggNOG" id="COG3623">
    <property type="taxonomic scope" value="Bacteria"/>
</dbReference>
<dbReference type="HOGENOM" id="CLU_082738_0_0_6"/>
<dbReference type="OMA" id="QAGMGHI"/>
<dbReference type="OrthoDB" id="3185623at2"/>
<dbReference type="UniPathway" id="UPA00263">
    <property type="reaction ID" value="UER00379"/>
</dbReference>
<dbReference type="Proteomes" id="UP000000541">
    <property type="component" value="Chromosome"/>
</dbReference>
<dbReference type="Proteomes" id="UP000002670">
    <property type="component" value="Chromosome"/>
</dbReference>
<dbReference type="GO" id="GO:0016861">
    <property type="term" value="F:intramolecular oxidoreductase activity, interconverting aldoses and ketoses"/>
    <property type="evidence" value="ECO:0007669"/>
    <property type="project" value="InterPro"/>
</dbReference>
<dbReference type="GO" id="GO:0034015">
    <property type="term" value="F:L-ribulose-5-phosphate 3-epimerase activity"/>
    <property type="evidence" value="ECO:0007669"/>
    <property type="project" value="UniProtKB-UniRule"/>
</dbReference>
<dbReference type="GO" id="GO:0019854">
    <property type="term" value="P:L-ascorbic acid catabolic process"/>
    <property type="evidence" value="ECO:0007669"/>
    <property type="project" value="UniProtKB-UniRule"/>
</dbReference>
<dbReference type="FunFam" id="3.20.20.150:FF:000003">
    <property type="entry name" value="L-ribulose-5-phosphate 3-epimerase UlaE"/>
    <property type="match status" value="1"/>
</dbReference>
<dbReference type="Gene3D" id="3.20.20.150">
    <property type="entry name" value="Divalent-metal-dependent TIM barrel enzymes"/>
    <property type="match status" value="1"/>
</dbReference>
<dbReference type="HAMAP" id="MF_01951">
    <property type="entry name" value="UlaE"/>
    <property type="match status" value="1"/>
</dbReference>
<dbReference type="InterPro" id="IPR004560">
    <property type="entry name" value="L-Ru-5P_3-Epase"/>
</dbReference>
<dbReference type="InterPro" id="IPR023492">
    <property type="entry name" value="L-Ru-5P_3-Epase_Enterobacteria"/>
</dbReference>
<dbReference type="InterPro" id="IPR050417">
    <property type="entry name" value="Sugar_Epim/Isomerase"/>
</dbReference>
<dbReference type="InterPro" id="IPR036237">
    <property type="entry name" value="Xyl_isomerase-like_sf"/>
</dbReference>
<dbReference type="InterPro" id="IPR013022">
    <property type="entry name" value="Xyl_isomerase-like_TIM-brl"/>
</dbReference>
<dbReference type="NCBIfam" id="TIGR00542">
    <property type="entry name" value="hxl6Piso_put"/>
    <property type="match status" value="1"/>
</dbReference>
<dbReference type="NCBIfam" id="NF009688">
    <property type="entry name" value="PRK13209.1"/>
    <property type="match status" value="1"/>
</dbReference>
<dbReference type="NCBIfam" id="NF009689">
    <property type="entry name" value="PRK13210.1"/>
    <property type="match status" value="1"/>
</dbReference>
<dbReference type="PANTHER" id="PTHR43489">
    <property type="entry name" value="ISOMERASE"/>
    <property type="match status" value="1"/>
</dbReference>
<dbReference type="PANTHER" id="PTHR43489:SF8">
    <property type="entry name" value="L-RIBULOSE-5-PHOSPHATE 3-EPIMERASE ULAE"/>
    <property type="match status" value="1"/>
</dbReference>
<dbReference type="Pfam" id="PF01261">
    <property type="entry name" value="AP_endonuc_2"/>
    <property type="match status" value="1"/>
</dbReference>
<dbReference type="SUPFAM" id="SSF51658">
    <property type="entry name" value="Xylose isomerase-like"/>
    <property type="match status" value="1"/>
</dbReference>
<reference key="1">
    <citation type="journal article" date="2001" name="Nature">
        <title>Complete genome sequence of a multiple drug resistant Salmonella enterica serovar Typhi CT18.</title>
        <authorList>
            <person name="Parkhill J."/>
            <person name="Dougan G."/>
            <person name="James K.D."/>
            <person name="Thomson N.R."/>
            <person name="Pickard D."/>
            <person name="Wain J."/>
            <person name="Churcher C.M."/>
            <person name="Mungall K.L."/>
            <person name="Bentley S.D."/>
            <person name="Holden M.T.G."/>
            <person name="Sebaihia M."/>
            <person name="Baker S."/>
            <person name="Basham D."/>
            <person name="Brooks K."/>
            <person name="Chillingworth T."/>
            <person name="Connerton P."/>
            <person name="Cronin A."/>
            <person name="Davis P."/>
            <person name="Davies R.M."/>
            <person name="Dowd L."/>
            <person name="White N."/>
            <person name="Farrar J."/>
            <person name="Feltwell T."/>
            <person name="Hamlin N."/>
            <person name="Haque A."/>
            <person name="Hien T.T."/>
            <person name="Holroyd S."/>
            <person name="Jagels K."/>
            <person name="Krogh A."/>
            <person name="Larsen T.S."/>
            <person name="Leather S."/>
            <person name="Moule S."/>
            <person name="O'Gaora P."/>
            <person name="Parry C."/>
            <person name="Quail M.A."/>
            <person name="Rutherford K.M."/>
            <person name="Simmonds M."/>
            <person name="Skelton J."/>
            <person name="Stevens K."/>
            <person name="Whitehead S."/>
            <person name="Barrell B.G."/>
        </authorList>
    </citation>
    <scope>NUCLEOTIDE SEQUENCE [LARGE SCALE GENOMIC DNA]</scope>
    <source>
        <strain>CT18</strain>
    </source>
</reference>
<reference key="2">
    <citation type="journal article" date="2003" name="J. Bacteriol.">
        <title>Comparative genomics of Salmonella enterica serovar Typhi strains Ty2 and CT18.</title>
        <authorList>
            <person name="Deng W."/>
            <person name="Liou S.-R."/>
            <person name="Plunkett G. III"/>
            <person name="Mayhew G.F."/>
            <person name="Rose D.J."/>
            <person name="Burland V."/>
            <person name="Kodoyianni V."/>
            <person name="Schwartz D.C."/>
            <person name="Blattner F.R."/>
        </authorList>
    </citation>
    <scope>NUCLEOTIDE SEQUENCE [LARGE SCALE GENOMIC DNA]</scope>
    <source>
        <strain>ATCC 700931 / Ty2</strain>
    </source>
</reference>
<evidence type="ECO:0000255" key="1">
    <source>
        <dbReference type="HAMAP-Rule" id="MF_01951"/>
    </source>
</evidence>
<organism>
    <name type="scientific">Salmonella typhi</name>
    <dbReference type="NCBI Taxonomy" id="90370"/>
    <lineage>
        <taxon>Bacteria</taxon>
        <taxon>Pseudomonadati</taxon>
        <taxon>Pseudomonadota</taxon>
        <taxon>Gammaproteobacteria</taxon>
        <taxon>Enterobacterales</taxon>
        <taxon>Enterobacteriaceae</taxon>
        <taxon>Salmonella</taxon>
    </lineage>
</organism>
<proteinExistence type="inferred from homology"/>
<keyword id="KW-0413">Isomerase</keyword>